<organism>
    <name type="scientific">Staphylococcus carnosus (strain TM300)</name>
    <dbReference type="NCBI Taxonomy" id="396513"/>
    <lineage>
        <taxon>Bacteria</taxon>
        <taxon>Bacillati</taxon>
        <taxon>Bacillota</taxon>
        <taxon>Bacilli</taxon>
        <taxon>Bacillales</taxon>
        <taxon>Staphylococcaceae</taxon>
        <taxon>Staphylococcus</taxon>
    </lineage>
</organism>
<accession>B9DMJ6</accession>
<proteinExistence type="inferred from homology"/>
<comment type="function">
    <text evidence="1">Catalyzes the condensation of the acetyl group of acetyl-CoA with 3-methyl-2-oxobutanoate (2-ketoisovalerate) to form 3-carboxy-3-hydroxy-4-methylpentanoate (2-isopropylmalate).</text>
</comment>
<comment type="catalytic activity">
    <reaction evidence="1">
        <text>3-methyl-2-oxobutanoate + acetyl-CoA + H2O = (2S)-2-isopropylmalate + CoA + H(+)</text>
        <dbReference type="Rhea" id="RHEA:21524"/>
        <dbReference type="ChEBI" id="CHEBI:1178"/>
        <dbReference type="ChEBI" id="CHEBI:11851"/>
        <dbReference type="ChEBI" id="CHEBI:15377"/>
        <dbReference type="ChEBI" id="CHEBI:15378"/>
        <dbReference type="ChEBI" id="CHEBI:57287"/>
        <dbReference type="ChEBI" id="CHEBI:57288"/>
        <dbReference type="EC" id="2.3.3.13"/>
    </reaction>
</comment>
<comment type="cofactor">
    <cofactor evidence="1">
        <name>Mn(2+)</name>
        <dbReference type="ChEBI" id="CHEBI:29035"/>
    </cofactor>
</comment>
<comment type="pathway">
    <text evidence="1">Amino-acid biosynthesis; L-leucine biosynthesis; L-leucine from 3-methyl-2-oxobutanoate: step 1/4.</text>
</comment>
<comment type="subunit">
    <text evidence="1">Homodimer.</text>
</comment>
<comment type="subcellular location">
    <subcellularLocation>
        <location evidence="1">Cytoplasm</location>
    </subcellularLocation>
</comment>
<comment type="similarity">
    <text evidence="1">Belongs to the alpha-IPM synthase/homocitrate synthase family. LeuA type 1 subfamily.</text>
</comment>
<name>LEU1_STACT</name>
<keyword id="KW-0028">Amino-acid biosynthesis</keyword>
<keyword id="KW-0100">Branched-chain amino acid biosynthesis</keyword>
<keyword id="KW-0963">Cytoplasm</keyword>
<keyword id="KW-0432">Leucine biosynthesis</keyword>
<keyword id="KW-0464">Manganese</keyword>
<keyword id="KW-0479">Metal-binding</keyword>
<keyword id="KW-1185">Reference proteome</keyword>
<keyword id="KW-0808">Transferase</keyword>
<sequence>MSHIQVFDTTLRDGEQTPGVSFSFDERLTIAKQLEKWGVDVIEAGFPASSQGSFDSVKAISETLTKTAVVGLARCKKSDIDAVYEATKDAKYPQLHVFIASSPIHLEHKLKMTQEELLENITENVSYGKSLFDVVQFSPEDATRTDLDFLVKCVQTAVDAGASIINIPDTVGFSYPSEFGNIFKVLIENVKSDHEVTYSAHCHDDLGLAVANSMAAIENGATRIEGAVNGIGERAGNTALEEVALGLYVRRDHYGIETNLKLDETKATSDLVASFAGIRVPRNKAIVGQNAFSHESGIHQDGFLKHPETYEIMTPQLVGIKSSELPLGKLSGKHAFAEKLKQLGYDITAEKQVELFKQFKSIADKKKNVSDHDVHALVQGHSHETNAAYQVETLQLQFVSEGVQSAVVVLKDHEGKEYPSAAIGTGSIVAVYNAVDQIFKAPSELLNYQITSVTEGSDAQAQVNVEIRIDGKTYYGIGVDHDVLLASCKAYVEANSNHLADTARKDGVVS</sequence>
<protein>
    <recommendedName>
        <fullName evidence="1">2-isopropylmalate synthase</fullName>
        <ecNumber evidence="1">2.3.3.13</ecNumber>
    </recommendedName>
    <alternativeName>
        <fullName evidence="1">Alpha-IPM synthase</fullName>
    </alternativeName>
    <alternativeName>
        <fullName evidence="1">Alpha-isopropylmalate synthase</fullName>
    </alternativeName>
</protein>
<evidence type="ECO:0000255" key="1">
    <source>
        <dbReference type="HAMAP-Rule" id="MF_01025"/>
    </source>
</evidence>
<feature type="chain" id="PRO_1000149309" description="2-isopropylmalate synthase">
    <location>
        <begin position="1"/>
        <end position="510"/>
    </location>
</feature>
<feature type="domain" description="Pyruvate carboxyltransferase" evidence="1">
    <location>
        <begin position="4"/>
        <end position="266"/>
    </location>
</feature>
<feature type="region of interest" description="Regulatory domain" evidence="1">
    <location>
        <begin position="390"/>
        <end position="510"/>
    </location>
</feature>
<feature type="binding site" evidence="1">
    <location>
        <position position="13"/>
    </location>
    <ligand>
        <name>Mn(2+)</name>
        <dbReference type="ChEBI" id="CHEBI:29035"/>
    </ligand>
</feature>
<feature type="binding site" evidence="1">
    <location>
        <position position="201"/>
    </location>
    <ligand>
        <name>Mn(2+)</name>
        <dbReference type="ChEBI" id="CHEBI:29035"/>
    </ligand>
</feature>
<feature type="binding site" evidence="1">
    <location>
        <position position="203"/>
    </location>
    <ligand>
        <name>Mn(2+)</name>
        <dbReference type="ChEBI" id="CHEBI:29035"/>
    </ligand>
</feature>
<feature type="binding site" evidence="1">
    <location>
        <position position="237"/>
    </location>
    <ligand>
        <name>Mn(2+)</name>
        <dbReference type="ChEBI" id="CHEBI:29035"/>
    </ligand>
</feature>
<reference key="1">
    <citation type="journal article" date="2009" name="Appl. Environ. Microbiol.">
        <title>Genome analysis of the meat starter culture bacterium Staphylococcus carnosus TM300.</title>
        <authorList>
            <person name="Rosenstein R."/>
            <person name="Nerz C."/>
            <person name="Biswas L."/>
            <person name="Resch A."/>
            <person name="Raddatz G."/>
            <person name="Schuster S.C."/>
            <person name="Goetz F."/>
        </authorList>
    </citation>
    <scope>NUCLEOTIDE SEQUENCE [LARGE SCALE GENOMIC DNA]</scope>
    <source>
        <strain>TM300</strain>
    </source>
</reference>
<dbReference type="EC" id="2.3.3.13" evidence="1"/>
<dbReference type="EMBL" id="AM295250">
    <property type="protein sequence ID" value="CAL28468.1"/>
    <property type="molecule type" value="Genomic_DNA"/>
</dbReference>
<dbReference type="SMR" id="B9DMJ6"/>
<dbReference type="KEGG" id="sca:SCA_1563"/>
<dbReference type="eggNOG" id="COG0119">
    <property type="taxonomic scope" value="Bacteria"/>
</dbReference>
<dbReference type="HOGENOM" id="CLU_022158_0_1_9"/>
<dbReference type="UniPathway" id="UPA00048">
    <property type="reaction ID" value="UER00070"/>
</dbReference>
<dbReference type="Proteomes" id="UP000000444">
    <property type="component" value="Chromosome"/>
</dbReference>
<dbReference type="GO" id="GO:0005737">
    <property type="term" value="C:cytoplasm"/>
    <property type="evidence" value="ECO:0007669"/>
    <property type="project" value="UniProtKB-SubCell"/>
</dbReference>
<dbReference type="GO" id="GO:0003852">
    <property type="term" value="F:2-isopropylmalate synthase activity"/>
    <property type="evidence" value="ECO:0007669"/>
    <property type="project" value="UniProtKB-UniRule"/>
</dbReference>
<dbReference type="GO" id="GO:0003985">
    <property type="term" value="F:acetyl-CoA C-acetyltransferase activity"/>
    <property type="evidence" value="ECO:0007669"/>
    <property type="project" value="UniProtKB-UniRule"/>
</dbReference>
<dbReference type="GO" id="GO:0030145">
    <property type="term" value="F:manganese ion binding"/>
    <property type="evidence" value="ECO:0007669"/>
    <property type="project" value="UniProtKB-UniRule"/>
</dbReference>
<dbReference type="GO" id="GO:0009098">
    <property type="term" value="P:L-leucine biosynthetic process"/>
    <property type="evidence" value="ECO:0007669"/>
    <property type="project" value="UniProtKB-UniRule"/>
</dbReference>
<dbReference type="CDD" id="cd07940">
    <property type="entry name" value="DRE_TIM_IPMS"/>
    <property type="match status" value="1"/>
</dbReference>
<dbReference type="FunFam" id="1.10.238.260:FF:000001">
    <property type="entry name" value="2-isopropylmalate synthase"/>
    <property type="match status" value="1"/>
</dbReference>
<dbReference type="FunFam" id="3.20.20.70:FF:000010">
    <property type="entry name" value="2-isopropylmalate synthase"/>
    <property type="match status" value="1"/>
</dbReference>
<dbReference type="FunFam" id="3.30.160.270:FF:000003">
    <property type="entry name" value="2-isopropylmalate synthase"/>
    <property type="match status" value="1"/>
</dbReference>
<dbReference type="Gene3D" id="1.10.238.260">
    <property type="match status" value="1"/>
</dbReference>
<dbReference type="Gene3D" id="3.30.160.270">
    <property type="match status" value="1"/>
</dbReference>
<dbReference type="Gene3D" id="3.20.20.70">
    <property type="entry name" value="Aldolase class I"/>
    <property type="match status" value="1"/>
</dbReference>
<dbReference type="HAMAP" id="MF_01025">
    <property type="entry name" value="LeuA_type1"/>
    <property type="match status" value="1"/>
</dbReference>
<dbReference type="InterPro" id="IPR050073">
    <property type="entry name" value="2-IPM_HCS-like"/>
</dbReference>
<dbReference type="InterPro" id="IPR013709">
    <property type="entry name" value="2-isopropylmalate_synth_dimer"/>
</dbReference>
<dbReference type="InterPro" id="IPR013785">
    <property type="entry name" value="Aldolase_TIM"/>
</dbReference>
<dbReference type="InterPro" id="IPR054691">
    <property type="entry name" value="LeuA/HCS_post-cat"/>
</dbReference>
<dbReference type="InterPro" id="IPR036230">
    <property type="entry name" value="LeuA_allosteric_dom_sf"/>
</dbReference>
<dbReference type="InterPro" id="IPR005671">
    <property type="entry name" value="LeuA_bact_synth"/>
</dbReference>
<dbReference type="InterPro" id="IPR000891">
    <property type="entry name" value="PYR_CT"/>
</dbReference>
<dbReference type="NCBIfam" id="TIGR00973">
    <property type="entry name" value="leuA_bact"/>
    <property type="match status" value="1"/>
</dbReference>
<dbReference type="NCBIfam" id="NF002086">
    <property type="entry name" value="PRK00915.1-3"/>
    <property type="match status" value="1"/>
</dbReference>
<dbReference type="NCBIfam" id="NF002088">
    <property type="entry name" value="PRK00915.1-5"/>
    <property type="match status" value="1"/>
</dbReference>
<dbReference type="PANTHER" id="PTHR10277:SF9">
    <property type="entry name" value="2-ISOPROPYLMALATE SYNTHASE 1, CHLOROPLASTIC-RELATED"/>
    <property type="match status" value="1"/>
</dbReference>
<dbReference type="PANTHER" id="PTHR10277">
    <property type="entry name" value="HOMOCITRATE SYNTHASE-RELATED"/>
    <property type="match status" value="1"/>
</dbReference>
<dbReference type="Pfam" id="PF22617">
    <property type="entry name" value="HCS_D2"/>
    <property type="match status" value="1"/>
</dbReference>
<dbReference type="Pfam" id="PF00682">
    <property type="entry name" value="HMGL-like"/>
    <property type="match status" value="1"/>
</dbReference>
<dbReference type="Pfam" id="PF08502">
    <property type="entry name" value="LeuA_dimer"/>
    <property type="match status" value="1"/>
</dbReference>
<dbReference type="SMART" id="SM00917">
    <property type="entry name" value="LeuA_dimer"/>
    <property type="match status" value="1"/>
</dbReference>
<dbReference type="SUPFAM" id="SSF110921">
    <property type="entry name" value="2-isopropylmalate synthase LeuA, allosteric (dimerisation) domain"/>
    <property type="match status" value="1"/>
</dbReference>
<dbReference type="SUPFAM" id="SSF51569">
    <property type="entry name" value="Aldolase"/>
    <property type="match status" value="1"/>
</dbReference>
<dbReference type="PROSITE" id="PS50991">
    <property type="entry name" value="PYR_CT"/>
    <property type="match status" value="1"/>
</dbReference>
<gene>
    <name evidence="1" type="primary">leuA</name>
    <name type="ordered locus">Sca_1563</name>
</gene>